<feature type="signal peptide" evidence="4">
    <location>
        <begin position="1"/>
        <end position="23"/>
    </location>
</feature>
<feature type="chain" id="PRO_0000002917" description="Hephaestin">
    <location>
        <begin position="24"/>
        <end position="1157"/>
    </location>
</feature>
<feature type="topological domain" description="Extracellular" evidence="4">
    <location>
        <begin position="24"/>
        <end position="1109"/>
    </location>
</feature>
<feature type="transmembrane region" description="Helical" evidence="4">
    <location>
        <begin position="1110"/>
        <end position="1130"/>
    </location>
</feature>
<feature type="topological domain" description="Cytoplasmic" evidence="4">
    <location>
        <begin position="1131"/>
        <end position="1157"/>
    </location>
</feature>
<feature type="domain" description="Plastocyanin-like 1" evidence="1">
    <location>
        <begin position="24"/>
        <end position="206"/>
    </location>
</feature>
<feature type="domain" description="Plastocyanin-like 2" evidence="1">
    <location>
        <begin position="218"/>
        <end position="366"/>
    </location>
</feature>
<feature type="domain" description="Plastocyanin-like 3" evidence="1">
    <location>
        <begin position="370"/>
        <end position="559"/>
    </location>
</feature>
<feature type="domain" description="Plastocyanin-like 4" evidence="1">
    <location>
        <begin position="569"/>
        <end position="717"/>
    </location>
</feature>
<feature type="domain" description="Plastocyanin-like 5" evidence="1">
    <location>
        <begin position="730"/>
        <end position="902"/>
    </location>
</feature>
<feature type="domain" description="Plastocyanin-like 6" evidence="1">
    <location>
        <begin position="910"/>
        <end position="1066"/>
    </location>
</feature>
<feature type="binding site" evidence="1">
    <location>
        <position position="70"/>
    </location>
    <ligand>
        <name>Na(+)</name>
        <dbReference type="ChEBI" id="CHEBI:29101"/>
        <label>1</label>
    </ligand>
</feature>
<feature type="binding site" evidence="1">
    <location>
        <position position="73"/>
    </location>
    <ligand>
        <name>Na(+)</name>
        <dbReference type="ChEBI" id="CHEBI:29101"/>
        <label>1</label>
    </ligand>
</feature>
<feature type="binding site" description="type 2 copper site" evidence="1">
    <location>
        <position position="126"/>
    </location>
    <ligand>
        <name>Cu(2+)</name>
        <dbReference type="ChEBI" id="CHEBI:29036"/>
        <label>1</label>
    </ligand>
</feature>
<feature type="binding site" evidence="1">
    <location>
        <position position="126"/>
    </location>
    <ligand>
        <name>O2</name>
        <dbReference type="ChEBI" id="CHEBI:15379"/>
    </ligand>
</feature>
<feature type="binding site" description="type 3 copper site" evidence="1">
    <location>
        <position position="128"/>
    </location>
    <ligand>
        <name>Cu(2+)</name>
        <dbReference type="ChEBI" id="CHEBI:29036"/>
        <label>2</label>
    </ligand>
</feature>
<feature type="binding site" evidence="1">
    <location>
        <position position="134"/>
    </location>
    <ligand>
        <name>Ca(2+)</name>
        <dbReference type="ChEBI" id="CHEBI:29108"/>
    </ligand>
</feature>
<feature type="binding site" evidence="1">
    <location>
        <position position="152"/>
    </location>
    <ligand>
        <name>Ca(2+)</name>
        <dbReference type="ChEBI" id="CHEBI:29108"/>
    </ligand>
</feature>
<feature type="binding site" evidence="1">
    <location>
        <position position="153"/>
    </location>
    <ligand>
        <name>Ca(2+)</name>
        <dbReference type="ChEBI" id="CHEBI:29108"/>
    </ligand>
</feature>
<feature type="binding site" description="type 3 copper site" evidence="1">
    <location>
        <position position="186"/>
    </location>
    <ligand>
        <name>Cu(2+)</name>
        <dbReference type="ChEBI" id="CHEBI:29036"/>
        <label>2</label>
    </ligand>
</feature>
<feature type="binding site" evidence="1">
    <location>
        <position position="186"/>
    </location>
    <ligand>
        <name>O2</name>
        <dbReference type="ChEBI" id="CHEBI:15379"/>
    </ligand>
</feature>
<feature type="binding site" description="type 3 copper site" evidence="1">
    <location>
        <position position="188"/>
    </location>
    <ligand>
        <name>Cu(2+)</name>
        <dbReference type="ChEBI" id="CHEBI:29036"/>
        <label>3</label>
    </ligand>
</feature>
<feature type="binding site" evidence="1">
    <location>
        <position position="265"/>
    </location>
    <ligand>
        <name>Na(+)</name>
        <dbReference type="ChEBI" id="CHEBI:29101"/>
        <label>1</label>
    </ligand>
</feature>
<feature type="binding site" description="type 1 copper site" evidence="1">
    <location>
        <position position="304"/>
    </location>
    <ligand>
        <name>Cu(2+)</name>
        <dbReference type="ChEBI" id="CHEBI:29036"/>
        <label>4</label>
    </ligand>
</feature>
<feature type="binding site" description="type 1 copper site" evidence="1">
    <location>
        <position position="347"/>
    </location>
    <ligand>
        <name>Cu(2+)</name>
        <dbReference type="ChEBI" id="CHEBI:29036"/>
        <label>4</label>
    </ligand>
</feature>
<feature type="binding site" description="type 1 copper site" evidence="1">
    <location>
        <position position="352"/>
    </location>
    <ligand>
        <name>Cu(2+)</name>
        <dbReference type="ChEBI" id="CHEBI:29036"/>
        <label>4</label>
    </ligand>
</feature>
<feature type="binding site" evidence="1">
    <location>
        <position position="416"/>
    </location>
    <ligand>
        <name>Na(+)</name>
        <dbReference type="ChEBI" id="CHEBI:29101"/>
        <label>2</label>
    </ligand>
</feature>
<feature type="binding site" evidence="1">
    <location>
        <position position="425"/>
    </location>
    <ligand>
        <name>Na(+)</name>
        <dbReference type="ChEBI" id="CHEBI:29101"/>
        <label>2</label>
    </ligand>
</feature>
<feature type="binding site" evidence="1">
    <location>
        <position position="428"/>
    </location>
    <ligand>
        <name>Na(+)</name>
        <dbReference type="ChEBI" id="CHEBI:29101"/>
        <label>2</label>
    </ligand>
</feature>
<feature type="binding site" evidence="1">
    <location>
        <position position="616"/>
    </location>
    <ligand>
        <name>Na(+)</name>
        <dbReference type="ChEBI" id="CHEBI:29101"/>
        <label>2</label>
    </ligand>
</feature>
<feature type="binding site" description="type 1 copper site" evidence="1">
    <location>
        <position position="655"/>
    </location>
    <ligand>
        <name>Cu(2+)</name>
        <dbReference type="ChEBI" id="CHEBI:29036"/>
        <label>5</label>
    </ligand>
</feature>
<feature type="binding site" description="type 1 copper site" evidence="1">
    <location>
        <position position="698"/>
    </location>
    <ligand>
        <name>Cu(2+)</name>
        <dbReference type="ChEBI" id="CHEBI:29036"/>
        <label>5</label>
    </ligand>
</feature>
<feature type="binding site" description="type 1 copper site" evidence="1">
    <location>
        <position position="703"/>
    </location>
    <ligand>
        <name>Cu(2+)</name>
        <dbReference type="ChEBI" id="CHEBI:29036"/>
        <label>5</label>
    </ligand>
</feature>
<feature type="binding site" description="type 1 copper site" evidence="1">
    <location>
        <position position="708"/>
    </location>
    <ligand>
        <name>Cu(2+)</name>
        <dbReference type="ChEBI" id="CHEBI:29036"/>
        <label>5</label>
    </ligand>
</feature>
<feature type="binding site" evidence="1">
    <location>
        <position position="768"/>
    </location>
    <ligand>
        <name>Na(+)</name>
        <dbReference type="ChEBI" id="CHEBI:29101"/>
        <label>3</label>
    </ligand>
</feature>
<feature type="binding site" evidence="1">
    <location>
        <position position="777"/>
    </location>
    <ligand>
        <name>Na(+)</name>
        <dbReference type="ChEBI" id="CHEBI:29101"/>
        <label>3</label>
    </ligand>
</feature>
<feature type="binding site" description="type 1 copper site" evidence="1">
    <location>
        <position position="999"/>
    </location>
    <ligand>
        <name>Cu(2+)</name>
        <dbReference type="ChEBI" id="CHEBI:29036"/>
        <label>6</label>
    </ligand>
</feature>
<feature type="binding site" description="type 2 copper site" evidence="1">
    <location>
        <position position="1002"/>
    </location>
    <ligand>
        <name>Cu(2+)</name>
        <dbReference type="ChEBI" id="CHEBI:29036"/>
        <label>1</label>
    </ligand>
</feature>
<feature type="binding site" evidence="1">
    <location>
        <position position="1002"/>
    </location>
    <ligand>
        <name>O2</name>
        <dbReference type="ChEBI" id="CHEBI:15379"/>
    </ligand>
</feature>
<feature type="binding site" description="type 3 copper site" evidence="1">
    <location>
        <position position="1004"/>
    </location>
    <ligand>
        <name>Cu(2+)</name>
        <dbReference type="ChEBI" id="CHEBI:29036"/>
        <label>3</label>
    </ligand>
</feature>
<feature type="binding site" evidence="1">
    <location>
        <position position="1004"/>
    </location>
    <ligand>
        <name>O2</name>
        <dbReference type="ChEBI" id="CHEBI:15379"/>
    </ligand>
</feature>
<feature type="binding site" description="type 3 copper site" evidence="1">
    <location>
        <position position="1044"/>
    </location>
    <ligand>
        <name>Cu(2+)</name>
        <dbReference type="ChEBI" id="CHEBI:29036"/>
        <label>3</label>
    </ligand>
</feature>
<feature type="binding site" description="type 1 copper site" evidence="1">
    <location>
        <position position="1045"/>
    </location>
    <ligand>
        <name>Cu(2+)</name>
        <dbReference type="ChEBI" id="CHEBI:29036"/>
        <label>6</label>
    </ligand>
</feature>
<feature type="binding site" description="type 3 copper site" evidence="1">
    <location>
        <position position="1046"/>
    </location>
    <ligand>
        <name>Cu(2+)</name>
        <dbReference type="ChEBI" id="CHEBI:29036"/>
        <label>2</label>
    </ligand>
</feature>
<feature type="binding site" evidence="1">
    <location>
        <position position="1046"/>
    </location>
    <ligand>
        <name>O2</name>
        <dbReference type="ChEBI" id="CHEBI:15379"/>
    </ligand>
</feature>
<feature type="binding site" description="type 1 copper site" evidence="1">
    <location>
        <position position="1050"/>
    </location>
    <ligand>
        <name>Cu(2+)</name>
        <dbReference type="ChEBI" id="CHEBI:29036"/>
        <label>6</label>
    </ligand>
</feature>
<feature type="binding site" description="type 1 copper site" evidence="1">
    <location>
        <position position="1055"/>
    </location>
    <ligand>
        <name>Cu(2+)</name>
        <dbReference type="ChEBI" id="CHEBI:29036"/>
        <label>6</label>
    </ligand>
</feature>
<feature type="modified residue" description="Phosphoserine" evidence="9">
    <location>
        <position position="1144"/>
    </location>
</feature>
<feature type="modified residue" description="Phosphoserine" evidence="9">
    <location>
        <position position="1149"/>
    </location>
</feature>
<feature type="modified residue" description="Phosphoserine" evidence="3">
    <location>
        <position position="1154"/>
    </location>
</feature>
<feature type="glycosylation site" description="N-linked (GlcNAc...) asparagine" evidence="4">
    <location>
        <position position="49"/>
    </location>
</feature>
<feature type="glycosylation site" description="N-linked (GlcNAc...) asparagine" evidence="4">
    <location>
        <position position="54"/>
    </location>
</feature>
<feature type="glycosylation site" description="N-linked (GlcNAc...) asparagine" evidence="4">
    <location>
        <position position="164"/>
    </location>
</feature>
<feature type="glycosylation site" description="N-linked (GlcNAc...) asparagine" evidence="4">
    <location>
        <position position="236"/>
    </location>
</feature>
<feature type="glycosylation site" description="N-linked (GlcNAc...) asparagine" evidence="4">
    <location>
        <position position="587"/>
    </location>
</feature>
<feature type="glycosylation site" description="N-linked (GlcNAc...) asparagine" evidence="4">
    <location>
        <position position="713"/>
    </location>
</feature>
<feature type="glycosylation site" description="N-linked (GlcNAc...) asparagine" evidence="4">
    <location>
        <position position="757"/>
    </location>
</feature>
<feature type="glycosylation site" description="N-linked (GlcNAc...) asparagine" evidence="4">
    <location>
        <position position="930"/>
    </location>
</feature>
<feature type="disulfide bond" evidence="4">
    <location>
        <begin position="180"/>
        <end position="206"/>
    </location>
</feature>
<feature type="disulfide bond" evidence="4">
    <location>
        <begin position="285"/>
        <end position="366"/>
    </location>
</feature>
<feature type="disulfide bond" evidence="4">
    <location>
        <begin position="533"/>
        <end position="559"/>
    </location>
</feature>
<feature type="disulfide bond" evidence="4">
    <location>
        <begin position="636"/>
        <end position="717"/>
    </location>
</feature>
<feature type="disulfide bond" evidence="4">
    <location>
        <begin position="876"/>
        <end position="902"/>
    </location>
</feature>
<reference key="1">
    <citation type="journal article" date="2001" name="Am. J. Physiol.">
        <title>Cloning and gastrointestinal expression of rat hephaestin: relationship to other iron transport proteins.</title>
        <authorList>
            <person name="Frazer D.M."/>
            <person name="Vulpe C.D."/>
            <person name="McKie A.T."/>
            <person name="Wilkins S.J."/>
            <person name="Trinder D."/>
            <person name="Cleghorn G.J."/>
            <person name="Anderson G.J."/>
        </authorList>
    </citation>
    <scope>NUCLEOTIDE SEQUENCE [MRNA]</scope>
    <scope>TISSUE SPECIFICITY</scope>
    <source>
        <strain>Sprague-Dawley</strain>
    </source>
</reference>
<reference key="2">
    <citation type="journal article" date="2012" name="Nat. Commun.">
        <title>Quantitative maps of protein phosphorylation sites across 14 different rat organs and tissues.</title>
        <authorList>
            <person name="Lundby A."/>
            <person name="Secher A."/>
            <person name="Lage K."/>
            <person name="Nordsborg N.B."/>
            <person name="Dmytriyev A."/>
            <person name="Lundby C."/>
            <person name="Olsen J.V."/>
        </authorList>
    </citation>
    <scope>PHOSPHORYLATION [LARGE SCALE ANALYSIS] AT SER-1144 AND SER-1149</scope>
    <scope>IDENTIFICATION BY MASS SPECTROMETRY [LARGE SCALE ANALYSIS]</scope>
</reference>
<evidence type="ECO:0000250" key="1">
    <source>
        <dbReference type="UniProtKB" id="P00450"/>
    </source>
</evidence>
<evidence type="ECO:0000250" key="2">
    <source>
        <dbReference type="UniProtKB" id="Q9BQS7"/>
    </source>
</evidence>
<evidence type="ECO:0000250" key="3">
    <source>
        <dbReference type="UniProtKB" id="Q9Z0Z4"/>
    </source>
</evidence>
<evidence type="ECO:0000255" key="4"/>
<evidence type="ECO:0000269" key="5">
    <source>
    </source>
</evidence>
<evidence type="ECO:0000303" key="6">
    <source>
    </source>
</evidence>
<evidence type="ECO:0000305" key="7"/>
<evidence type="ECO:0000312" key="8">
    <source>
        <dbReference type="RGD" id="71060"/>
    </source>
</evidence>
<evidence type="ECO:0007744" key="9">
    <source>
    </source>
</evidence>
<gene>
    <name evidence="8" type="primary">Heph</name>
</gene>
<sequence length="1157" mass="129593">MKAGHLLWALLLMHSLCSLPTDGAIRNYYLGIQDIQWNYAPKGRNVITNQTLNNDTVASSFLKSGKNRIGGTYKKTVYKEYSDGTYTNEIAKPAWLGFLGPLLKAEMGDVILIHLKNFASRPYTIHPHGVFYEKDSEGSLYPDGSSGYLKADDSVPPGGSHVYNWSIPEGHAPTEADPACLTWIYHSHVDAPRDIATGLIGPLITCKRGTLDGNSPPQRKDVDHNFFLLFSVIDENLSWHLDDNIATYCSDPASVDKEDGPFQDSNRMHAINGFVFGNLPELSMCAQKHVAWHLFGMGNEIDVHTAFFHGQTLSIRGHRTDVAHIFPATFVTAEMVPQKSGTWLISCVVNSHLKSGMQAFYKVDSCSMDPPVEQLTGKVRQYFIQAHEIQWDYGPIGHDGRTGKSLREPGSGPDKYFQKSSSRIGGTYWKVRYEAFQDETFQERLHQEEETHLGILGPVIRAEVGDTIQVVFYNRASQPFSIQPHGVFYEKSSEGTVYNDGTSYPKVAKSFEKVTYYWTVPPHAGPTAEDPACLTWMYFSAADPTRDTNSGLVGPLLVCKAGALGEDGKQKGVDKEFFLLFTIFDENESWYNNANQAAGMLDSRLLSEDVEGFEDSNRMHAINGFLFSNLPRLDICKGDTVAWHLLGLGTENDVHGVMFEGNTLQLQGMRKSAAMLFPHTFVTAIMQPDNPGIFEIYCQAGSHREAGMQAIYNVSQCSSHQDSPRQHYQASRVYYIMAEEIEWDYCPDRSWELEWYNTSEKDSYGHVFLSNKDGLLGSKYKKAVFREYTDGTFRIPQPRSGPEEHLGILGPLIRGEVGDILTVVFKNKASRPYSIHAHGVLESSTGWPQAAEPGEVLTYQWNIPERSGPGPSDSACVSWIYYSAVDPIKDMYSGLVGPLVICRNGILEPNGGRNDMDREFALLFLIFDENQSWYLKENIATYGPQETSHVNLQDATFLESNKMHAINGKLYANLRGLTVYQGERVAWYMLAMGQDTDIHTVHFHAESFLYQNGHSYRADVVDLFPGTFEVVEMVASNPGAWLMHCHVTDHVHAGMETIFTVLSHEEHFSTMTTITKEIGKAVILQNIGEGNVKMLGMNIPVKNVEILSSALIAICVVLLLIALALGGVVWYQHRQRKLRRNRRSILDDSFKLLSLKQ</sequence>
<comment type="function">
    <text evidence="3">Plasma membrane ferroxidase that mediates the extracellular conversion of ferrous/Fe(2+) iron into its ferric/Fe(3+) form. Couples ferroportin which specifically exports ferrous/Fe(2+) iron from cells to transferrin that only binds and shuttles extracellular ferric/Fe(3+) iron throughout the body. By helping iron transfer from cells to blood mainly contributes to dietary iron absorption by the intestinal epithelium and more generally regulates iron levels in the body.</text>
</comment>
<comment type="catalytic activity">
    <reaction evidence="2">
        <text>4 Fe(2+) + O2 + 4 H(+) = 4 Fe(3+) + 2 H2O</text>
        <dbReference type="Rhea" id="RHEA:11148"/>
        <dbReference type="ChEBI" id="CHEBI:15377"/>
        <dbReference type="ChEBI" id="CHEBI:15378"/>
        <dbReference type="ChEBI" id="CHEBI:15379"/>
        <dbReference type="ChEBI" id="CHEBI:29033"/>
        <dbReference type="ChEBI" id="CHEBI:29034"/>
        <dbReference type="EC" id="1.16.3.1"/>
    </reaction>
    <physiologicalReaction direction="left-to-right" evidence="2">
        <dbReference type="Rhea" id="RHEA:11149"/>
    </physiologicalReaction>
</comment>
<comment type="cofactor">
    <cofactor evidence="1">
        <name>Cu cation</name>
        <dbReference type="ChEBI" id="CHEBI:23378"/>
    </cofactor>
    <text evidence="1">Binds 6 Cu cations per monomer.</text>
</comment>
<comment type="subunit">
    <text evidence="2">Part of a complex composed of SLC40A1/ferroportin, TF/transferrin and HEPH/hephaestin that transfers iron from cells to transferrin.</text>
</comment>
<comment type="subcellular location">
    <subcellularLocation>
        <location evidence="2">Basolateral cell membrane</location>
        <topology evidence="4">Single-pass type I membrane protein</topology>
    </subcellularLocation>
</comment>
<comment type="tissue specificity">
    <text evidence="5">Highly expressed in small intestine and colon.</text>
</comment>
<comment type="similarity">
    <text evidence="7">Belongs to the multicopper oxidase family.</text>
</comment>
<dbReference type="EC" id="1.16.3.1" evidence="2"/>
<dbReference type="EMBL" id="AF246120">
    <property type="protein sequence ID" value="AAL08217.1"/>
    <property type="molecule type" value="mRNA"/>
</dbReference>
<dbReference type="RefSeq" id="NP_579838.1">
    <property type="nucleotide sequence ID" value="NM_133304.1"/>
</dbReference>
<dbReference type="RefSeq" id="XP_006257108.1">
    <property type="nucleotide sequence ID" value="XM_006257046.3"/>
</dbReference>
<dbReference type="RefSeq" id="XP_006257110.1">
    <property type="nucleotide sequence ID" value="XM_006257048.5"/>
</dbReference>
<dbReference type="RefSeq" id="XP_006257111.1">
    <property type="nucleotide sequence ID" value="XM_006257049.5"/>
</dbReference>
<dbReference type="RefSeq" id="XP_008771470.1">
    <property type="nucleotide sequence ID" value="XM_008773248.1"/>
</dbReference>
<dbReference type="RefSeq" id="XP_008771471.1">
    <property type="nucleotide sequence ID" value="XM_008773249.2"/>
</dbReference>
<dbReference type="RefSeq" id="XP_008771472.1">
    <property type="nucleotide sequence ID" value="XM_008773250.2"/>
</dbReference>
<dbReference type="RefSeq" id="XP_038955348.1">
    <property type="nucleotide sequence ID" value="XM_039099420.2"/>
</dbReference>
<dbReference type="RefSeq" id="XP_038955349.1">
    <property type="nucleotide sequence ID" value="XM_039099421.2"/>
</dbReference>
<dbReference type="RefSeq" id="XP_038955350.1">
    <property type="nucleotide sequence ID" value="XM_039099422.2"/>
</dbReference>
<dbReference type="RefSeq" id="XP_038955351.1">
    <property type="nucleotide sequence ID" value="XM_039099423.2"/>
</dbReference>
<dbReference type="RefSeq" id="XP_038955352.1">
    <property type="nucleotide sequence ID" value="XM_039099424.2"/>
</dbReference>
<dbReference type="RefSeq" id="XP_038955354.1">
    <property type="nucleotide sequence ID" value="XM_039099426.2"/>
</dbReference>
<dbReference type="RefSeq" id="XP_063135830.1">
    <property type="nucleotide sequence ID" value="XM_063279760.1"/>
</dbReference>
<dbReference type="SMR" id="Q920H8"/>
<dbReference type="FunCoup" id="Q920H8">
    <property type="interactions" value="54"/>
</dbReference>
<dbReference type="STRING" id="10116.ENSRNOP00000017312"/>
<dbReference type="GlyCosmos" id="Q920H8">
    <property type="glycosylation" value="8 sites, No reported glycans"/>
</dbReference>
<dbReference type="GlyGen" id="Q920H8">
    <property type="glycosylation" value="9 sites"/>
</dbReference>
<dbReference type="iPTMnet" id="Q920H8"/>
<dbReference type="PhosphoSitePlus" id="Q920H8"/>
<dbReference type="PaxDb" id="10116-ENSRNOP00000017312"/>
<dbReference type="Ensembl" id="ENSRNOT00000017312.6">
    <property type="protein sequence ID" value="ENSRNOP00000017312.2"/>
    <property type="gene ID" value="ENSRNOG00000012294.8"/>
</dbReference>
<dbReference type="GeneID" id="117240"/>
<dbReference type="KEGG" id="rno:117240"/>
<dbReference type="AGR" id="RGD:71060"/>
<dbReference type="CTD" id="9843"/>
<dbReference type="RGD" id="71060">
    <property type="gene designation" value="Heph"/>
</dbReference>
<dbReference type="eggNOG" id="KOG1263">
    <property type="taxonomic scope" value="Eukaryota"/>
</dbReference>
<dbReference type="GeneTree" id="ENSGT00940000158517"/>
<dbReference type="HOGENOM" id="CLU_005569_0_0_1"/>
<dbReference type="InParanoid" id="Q920H8"/>
<dbReference type="OMA" id="YCQEGSH"/>
<dbReference type="OrthoDB" id="6259at9989"/>
<dbReference type="PhylomeDB" id="Q920H8"/>
<dbReference type="TreeFam" id="TF329807"/>
<dbReference type="Reactome" id="R-RNO-425410">
    <property type="pathway name" value="Metal ion SLC transporters"/>
</dbReference>
<dbReference type="Reactome" id="R-RNO-917937">
    <property type="pathway name" value="Iron uptake and transport"/>
</dbReference>
<dbReference type="PRO" id="PR:Q920H8"/>
<dbReference type="Proteomes" id="UP000002494">
    <property type="component" value="Chromosome X"/>
</dbReference>
<dbReference type="Bgee" id="ENSRNOG00000012294">
    <property type="expression patterns" value="Expressed in duodenum and 18 other cell types or tissues"/>
</dbReference>
<dbReference type="GO" id="GO:0016323">
    <property type="term" value="C:basolateral plasma membrane"/>
    <property type="evidence" value="ECO:0000266"/>
    <property type="project" value="RGD"/>
</dbReference>
<dbReference type="GO" id="GO:0048471">
    <property type="term" value="C:perinuclear region of cytoplasm"/>
    <property type="evidence" value="ECO:0000314"/>
    <property type="project" value="RGD"/>
</dbReference>
<dbReference type="GO" id="GO:0005886">
    <property type="term" value="C:plasma membrane"/>
    <property type="evidence" value="ECO:0000318"/>
    <property type="project" value="GO_Central"/>
</dbReference>
<dbReference type="GO" id="GO:0005507">
    <property type="term" value="F:copper ion binding"/>
    <property type="evidence" value="ECO:0007669"/>
    <property type="project" value="InterPro"/>
</dbReference>
<dbReference type="GO" id="GO:0004322">
    <property type="term" value="F:ferroxidase activity"/>
    <property type="evidence" value="ECO:0000250"/>
    <property type="project" value="UniProtKB"/>
</dbReference>
<dbReference type="GO" id="GO:0030218">
    <property type="term" value="P:erythrocyte differentiation"/>
    <property type="evidence" value="ECO:0000266"/>
    <property type="project" value="RGD"/>
</dbReference>
<dbReference type="GO" id="GO:0160179">
    <property type="term" value="P:intestinal iron absorption"/>
    <property type="evidence" value="ECO:0000250"/>
    <property type="project" value="UniProtKB"/>
</dbReference>
<dbReference type="GO" id="GO:0006826">
    <property type="term" value="P:iron ion transport"/>
    <property type="evidence" value="ECO:0007669"/>
    <property type="project" value="UniProtKB-KW"/>
</dbReference>
<dbReference type="GO" id="GO:0060586">
    <property type="term" value="P:multicellular organismal-level iron ion homeostasis"/>
    <property type="evidence" value="ECO:0000250"/>
    <property type="project" value="UniProtKB"/>
</dbReference>
<dbReference type="GO" id="GO:1904040">
    <property type="term" value="P:positive regulation of iron export across plasma membrane"/>
    <property type="evidence" value="ECO:0000250"/>
    <property type="project" value="UniProtKB"/>
</dbReference>
<dbReference type="CDD" id="cd04222">
    <property type="entry name" value="CuRO_1_ceruloplasmin"/>
    <property type="match status" value="1"/>
</dbReference>
<dbReference type="CDD" id="cd04224">
    <property type="entry name" value="CuRO_3_ceruloplasmin"/>
    <property type="match status" value="1"/>
</dbReference>
<dbReference type="CDD" id="cd04225">
    <property type="entry name" value="CuRO_5_ceruloplasmin"/>
    <property type="match status" value="1"/>
</dbReference>
<dbReference type="FunFam" id="2.60.40.420:FF:000009">
    <property type="entry name" value="Ceruloplasmin"/>
    <property type="match status" value="1"/>
</dbReference>
<dbReference type="FunFam" id="2.60.40.420:FF:000015">
    <property type="entry name" value="Ceruloplasmin"/>
    <property type="match status" value="1"/>
</dbReference>
<dbReference type="FunFam" id="2.60.40.420:FF:000075">
    <property type="entry name" value="hephaestin isoform X2"/>
    <property type="match status" value="1"/>
</dbReference>
<dbReference type="FunFam" id="2.60.40.420:FF:000002">
    <property type="entry name" value="Hephaestin like 1"/>
    <property type="match status" value="1"/>
</dbReference>
<dbReference type="Gene3D" id="2.60.40.420">
    <property type="entry name" value="Cupredoxins - blue copper proteins"/>
    <property type="match status" value="3"/>
</dbReference>
<dbReference type="InterPro" id="IPR048236">
    <property type="entry name" value="Ceruloplasmin-like_CuRO_5"/>
</dbReference>
<dbReference type="InterPro" id="IPR011707">
    <property type="entry name" value="Cu-oxidase-like_N"/>
</dbReference>
<dbReference type="InterPro" id="IPR011706">
    <property type="entry name" value="Cu-oxidase_C"/>
</dbReference>
<dbReference type="InterPro" id="IPR045087">
    <property type="entry name" value="Cu-oxidase_fam"/>
</dbReference>
<dbReference type="InterPro" id="IPR033138">
    <property type="entry name" value="Cu_oxidase_CS"/>
</dbReference>
<dbReference type="InterPro" id="IPR002355">
    <property type="entry name" value="Cu_oxidase_Cu_BS"/>
</dbReference>
<dbReference type="InterPro" id="IPR008972">
    <property type="entry name" value="Cupredoxin"/>
</dbReference>
<dbReference type="PANTHER" id="PTHR11709:SF221">
    <property type="entry name" value="HEPHAESTIN"/>
    <property type="match status" value="1"/>
</dbReference>
<dbReference type="PANTHER" id="PTHR11709">
    <property type="entry name" value="MULTI-COPPER OXIDASE"/>
    <property type="match status" value="1"/>
</dbReference>
<dbReference type="Pfam" id="PF07731">
    <property type="entry name" value="Cu-oxidase_2"/>
    <property type="match status" value="1"/>
</dbReference>
<dbReference type="Pfam" id="PF07732">
    <property type="entry name" value="Cu-oxidase_3"/>
    <property type="match status" value="3"/>
</dbReference>
<dbReference type="SUPFAM" id="SSF49503">
    <property type="entry name" value="Cupredoxins"/>
    <property type="match status" value="6"/>
</dbReference>
<dbReference type="PROSITE" id="PS00079">
    <property type="entry name" value="MULTICOPPER_OXIDASE1"/>
    <property type="match status" value="3"/>
</dbReference>
<dbReference type="PROSITE" id="PS00080">
    <property type="entry name" value="MULTICOPPER_OXIDASE2"/>
    <property type="match status" value="1"/>
</dbReference>
<protein>
    <recommendedName>
        <fullName evidence="6">Hephaestin</fullName>
        <ecNumber evidence="2">1.16.3.1</ecNumber>
    </recommendedName>
</protein>
<proteinExistence type="evidence at protein level"/>
<name>HEPH_RAT</name>
<keyword id="KW-0106">Calcium</keyword>
<keyword id="KW-1003">Cell membrane</keyword>
<keyword id="KW-1015">Disulfide bond</keyword>
<keyword id="KW-0325">Glycoprotein</keyword>
<keyword id="KW-0406">Ion transport</keyword>
<keyword id="KW-0408">Iron</keyword>
<keyword id="KW-0410">Iron transport</keyword>
<keyword id="KW-0472">Membrane</keyword>
<keyword id="KW-0479">Metal-binding</keyword>
<keyword id="KW-0560">Oxidoreductase</keyword>
<keyword id="KW-0597">Phosphoprotein</keyword>
<keyword id="KW-1185">Reference proteome</keyword>
<keyword id="KW-0677">Repeat</keyword>
<keyword id="KW-0732">Signal</keyword>
<keyword id="KW-0915">Sodium</keyword>
<keyword id="KW-0812">Transmembrane</keyword>
<keyword id="KW-1133">Transmembrane helix</keyword>
<keyword id="KW-0813">Transport</keyword>
<accession>Q920H8</accession>
<organism>
    <name type="scientific">Rattus norvegicus</name>
    <name type="common">Rat</name>
    <dbReference type="NCBI Taxonomy" id="10116"/>
    <lineage>
        <taxon>Eukaryota</taxon>
        <taxon>Metazoa</taxon>
        <taxon>Chordata</taxon>
        <taxon>Craniata</taxon>
        <taxon>Vertebrata</taxon>
        <taxon>Euteleostomi</taxon>
        <taxon>Mammalia</taxon>
        <taxon>Eutheria</taxon>
        <taxon>Euarchontoglires</taxon>
        <taxon>Glires</taxon>
        <taxon>Rodentia</taxon>
        <taxon>Myomorpha</taxon>
        <taxon>Muroidea</taxon>
        <taxon>Muridae</taxon>
        <taxon>Murinae</taxon>
        <taxon>Rattus</taxon>
    </lineage>
</organism>